<comment type="function">
    <text evidence="1">Catalyzes the N-acylation of UDP-3-O-acylglucosamine using 3-hydroxyacyl-ACP as the acyl donor. Is involved in the biosynthesis of lipid A, a phosphorylated glycolipid that anchors the lipopolysaccharide to the outer membrane of the cell.</text>
</comment>
<comment type="catalytic activity">
    <reaction evidence="1">
        <text>a UDP-3-O-[(3R)-3-hydroxyacyl]-alpha-D-glucosamine + a (3R)-hydroxyacyl-[ACP] = a UDP-2-N,3-O-bis[(3R)-3-hydroxyacyl]-alpha-D-glucosamine + holo-[ACP] + H(+)</text>
        <dbReference type="Rhea" id="RHEA:53836"/>
        <dbReference type="Rhea" id="RHEA-COMP:9685"/>
        <dbReference type="Rhea" id="RHEA-COMP:9945"/>
        <dbReference type="ChEBI" id="CHEBI:15378"/>
        <dbReference type="ChEBI" id="CHEBI:64479"/>
        <dbReference type="ChEBI" id="CHEBI:78827"/>
        <dbReference type="ChEBI" id="CHEBI:137740"/>
        <dbReference type="ChEBI" id="CHEBI:137748"/>
        <dbReference type="EC" id="2.3.1.191"/>
    </reaction>
</comment>
<comment type="pathway">
    <text evidence="1">Bacterial outer membrane biogenesis; LPS lipid A biosynthesis.</text>
</comment>
<comment type="subunit">
    <text evidence="1">Homotrimer.</text>
</comment>
<comment type="similarity">
    <text evidence="1">Belongs to the transferase hexapeptide repeat family. LpxD subfamily.</text>
</comment>
<sequence length="359" mass="38764">MPQELVYTLQQLADLLKVEVQGNTETPISGVEEISAAKAHHVTFLDNEKYARFIKITEAGAIILSKAQAQKYGHLNKNFLIVSEFPSIAFQKCIELFISPVDSGFPGIHPTAVIHPTASIGKDVCIEPYAVICQHACIGDSTYIGTGSVIGAYSTLGEHCLVHPKVVVRERVEIGKRVIIQPGAVIGSCGFGYITNAFGRHKHLKHLGKVIIEDDVEIGANTTIDRGRFKNSVIREGTKIDNQVQIAHHVEVGKHSMIVAQAGIAGSTKIGNHVIIGGQTGITGHISITDHVIMMAQTGVTKSISSPGIYGGAPARPYQEIHRQVAKIRSLPKLEERLGMLEEKVKGLSAQSTELQITP</sequence>
<feature type="chain" id="PRO_0000264357" description="UDP-3-O-acylglucosamine N-acyltransferase">
    <location>
        <begin position="1"/>
        <end position="359"/>
    </location>
</feature>
<feature type="active site" description="Proton acceptor" evidence="1">
    <location>
        <position position="248"/>
    </location>
</feature>
<reference key="1">
    <citation type="journal article" date="2005" name="Genome Res.">
        <title>The Chlamydophila abortus genome sequence reveals an array of variable proteins that contribute to interspecies variation.</title>
        <authorList>
            <person name="Thomson N.R."/>
            <person name="Yeats C."/>
            <person name="Bell K."/>
            <person name="Holden M.T.G."/>
            <person name="Bentley S.D."/>
            <person name="Livingstone M."/>
            <person name="Cerdeno-Tarraga A.-M."/>
            <person name="Harris B."/>
            <person name="Doggett J."/>
            <person name="Ormond D."/>
            <person name="Mungall K."/>
            <person name="Clarke K."/>
            <person name="Feltwell T."/>
            <person name="Hance Z."/>
            <person name="Sanders M."/>
            <person name="Quail M.A."/>
            <person name="Price C."/>
            <person name="Barrell B.G."/>
            <person name="Parkhill J."/>
            <person name="Longbottom D."/>
        </authorList>
    </citation>
    <scope>NUCLEOTIDE SEQUENCE [LARGE SCALE GENOMIC DNA]</scope>
    <source>
        <strain>DSM 27085 / S26/3</strain>
    </source>
</reference>
<evidence type="ECO:0000255" key="1">
    <source>
        <dbReference type="HAMAP-Rule" id="MF_00523"/>
    </source>
</evidence>
<accession>Q5L612</accession>
<organism>
    <name type="scientific">Chlamydia abortus (strain DSM 27085 / S26/3)</name>
    <name type="common">Chlamydophila abortus</name>
    <dbReference type="NCBI Taxonomy" id="218497"/>
    <lineage>
        <taxon>Bacteria</taxon>
        <taxon>Pseudomonadati</taxon>
        <taxon>Chlamydiota</taxon>
        <taxon>Chlamydiia</taxon>
        <taxon>Chlamydiales</taxon>
        <taxon>Chlamydiaceae</taxon>
        <taxon>Chlamydia/Chlamydophila group</taxon>
        <taxon>Chlamydia</taxon>
    </lineage>
</organism>
<keyword id="KW-0012">Acyltransferase</keyword>
<keyword id="KW-0441">Lipid A biosynthesis</keyword>
<keyword id="KW-0444">Lipid biosynthesis</keyword>
<keyword id="KW-0443">Lipid metabolism</keyword>
<keyword id="KW-0677">Repeat</keyword>
<keyword id="KW-0808">Transferase</keyword>
<gene>
    <name evidence="1" type="primary">lpxD</name>
    <name type="ordered locus">CAB466</name>
</gene>
<name>LPXD_CHLAB</name>
<proteinExistence type="inferred from homology"/>
<protein>
    <recommendedName>
        <fullName evidence="1">UDP-3-O-acylglucosamine N-acyltransferase</fullName>
        <ecNumber evidence="1">2.3.1.191</ecNumber>
    </recommendedName>
</protein>
<dbReference type="EC" id="2.3.1.191" evidence="1"/>
<dbReference type="EMBL" id="CR848038">
    <property type="protein sequence ID" value="CAH63919.1"/>
    <property type="molecule type" value="Genomic_DNA"/>
</dbReference>
<dbReference type="RefSeq" id="WP_011097096.1">
    <property type="nucleotide sequence ID" value="NC_004552.2"/>
</dbReference>
<dbReference type="SMR" id="Q5L612"/>
<dbReference type="KEGG" id="cab:CAB466"/>
<dbReference type="eggNOG" id="COG1044">
    <property type="taxonomic scope" value="Bacteria"/>
</dbReference>
<dbReference type="HOGENOM" id="CLU_049865_0_0_0"/>
<dbReference type="OrthoDB" id="9784739at2"/>
<dbReference type="UniPathway" id="UPA00973"/>
<dbReference type="Proteomes" id="UP000001012">
    <property type="component" value="Chromosome"/>
</dbReference>
<dbReference type="GO" id="GO:0016020">
    <property type="term" value="C:membrane"/>
    <property type="evidence" value="ECO:0007669"/>
    <property type="project" value="GOC"/>
</dbReference>
<dbReference type="GO" id="GO:0016410">
    <property type="term" value="F:N-acyltransferase activity"/>
    <property type="evidence" value="ECO:0007669"/>
    <property type="project" value="InterPro"/>
</dbReference>
<dbReference type="GO" id="GO:0009245">
    <property type="term" value="P:lipid A biosynthetic process"/>
    <property type="evidence" value="ECO:0007669"/>
    <property type="project" value="UniProtKB-UniRule"/>
</dbReference>
<dbReference type="CDD" id="cd03352">
    <property type="entry name" value="LbH_LpxD"/>
    <property type="match status" value="1"/>
</dbReference>
<dbReference type="Gene3D" id="1.20.5.170">
    <property type="match status" value="1"/>
</dbReference>
<dbReference type="Gene3D" id="2.160.10.10">
    <property type="entry name" value="Hexapeptide repeat proteins"/>
    <property type="match status" value="1"/>
</dbReference>
<dbReference type="Gene3D" id="3.40.1390.10">
    <property type="entry name" value="MurE/MurF, N-terminal domain"/>
    <property type="match status" value="1"/>
</dbReference>
<dbReference type="HAMAP" id="MF_00523">
    <property type="entry name" value="LpxD"/>
    <property type="match status" value="1"/>
</dbReference>
<dbReference type="InterPro" id="IPR001451">
    <property type="entry name" value="Hexapep"/>
</dbReference>
<dbReference type="InterPro" id="IPR007691">
    <property type="entry name" value="LpxD"/>
</dbReference>
<dbReference type="InterPro" id="IPR011004">
    <property type="entry name" value="Trimer_LpxA-like_sf"/>
</dbReference>
<dbReference type="InterPro" id="IPR020573">
    <property type="entry name" value="UDP_GlcNAc_AcTrfase_non-rep"/>
</dbReference>
<dbReference type="NCBIfam" id="TIGR01853">
    <property type="entry name" value="lipid_A_lpxD"/>
    <property type="match status" value="1"/>
</dbReference>
<dbReference type="NCBIfam" id="NF002060">
    <property type="entry name" value="PRK00892.1"/>
    <property type="match status" value="1"/>
</dbReference>
<dbReference type="PANTHER" id="PTHR43378">
    <property type="entry name" value="UDP-3-O-ACYLGLUCOSAMINE N-ACYLTRANSFERASE"/>
    <property type="match status" value="1"/>
</dbReference>
<dbReference type="PANTHER" id="PTHR43378:SF2">
    <property type="entry name" value="UDP-3-O-ACYLGLUCOSAMINE N-ACYLTRANSFERASE 1, MITOCHONDRIAL-RELATED"/>
    <property type="match status" value="1"/>
</dbReference>
<dbReference type="Pfam" id="PF00132">
    <property type="entry name" value="Hexapep"/>
    <property type="match status" value="3"/>
</dbReference>
<dbReference type="Pfam" id="PF04613">
    <property type="entry name" value="LpxD"/>
    <property type="match status" value="1"/>
</dbReference>
<dbReference type="SUPFAM" id="SSF51161">
    <property type="entry name" value="Trimeric LpxA-like enzymes"/>
    <property type="match status" value="1"/>
</dbReference>